<proteinExistence type="evidence at transcript level"/>
<protein>
    <recommendedName>
        <fullName>m7GpppN-mRNA hydrolase NUDT17</fullName>
        <ecNumber evidence="2">3.6.1.62</ecNumber>
    </recommendedName>
    <alternativeName>
        <fullName>Nucleoside diphosphate-linked moiety X motif 17</fullName>
        <shortName>Nudix motif 17</shortName>
    </alternativeName>
</protein>
<evidence type="ECO:0000250" key="1"/>
<evidence type="ECO:0000250" key="2">
    <source>
        <dbReference type="UniProtKB" id="Q9CWD3"/>
    </source>
</evidence>
<evidence type="ECO:0000255" key="3">
    <source>
        <dbReference type="PROSITE-ProRule" id="PRU00794"/>
    </source>
</evidence>
<evidence type="ECO:0000305" key="4"/>
<dbReference type="EC" id="3.6.1.62" evidence="2"/>
<dbReference type="EMBL" id="BC087418">
    <property type="protein sequence ID" value="AAH87418.1"/>
    <property type="molecule type" value="mRNA"/>
</dbReference>
<dbReference type="RefSeq" id="NP_001088761.1">
    <property type="nucleotide sequence ID" value="NM_001095292.1"/>
</dbReference>
<dbReference type="SMR" id="Q5PQ04"/>
<dbReference type="DNASU" id="496025"/>
<dbReference type="GeneID" id="496025"/>
<dbReference type="KEGG" id="xla:496025"/>
<dbReference type="AGR" id="Xenbase:XB-GENE-979162"/>
<dbReference type="CTD" id="496025"/>
<dbReference type="Xenbase" id="XB-GENE-979162">
    <property type="gene designation" value="nudt17.L"/>
</dbReference>
<dbReference type="OrthoDB" id="447842at2759"/>
<dbReference type="Proteomes" id="UP000186698">
    <property type="component" value="Chromosome 8L"/>
</dbReference>
<dbReference type="Bgee" id="496025">
    <property type="expression patterns" value="Expressed in internal ear and 19 other cell types or tissues"/>
</dbReference>
<dbReference type="GO" id="GO:0005829">
    <property type="term" value="C:cytosol"/>
    <property type="evidence" value="ECO:0007669"/>
    <property type="project" value="TreeGrafter"/>
</dbReference>
<dbReference type="GO" id="GO:0005777">
    <property type="term" value="C:peroxisome"/>
    <property type="evidence" value="ECO:0000318"/>
    <property type="project" value="GO_Central"/>
</dbReference>
<dbReference type="GO" id="GO:0046872">
    <property type="term" value="F:metal ion binding"/>
    <property type="evidence" value="ECO:0007669"/>
    <property type="project" value="UniProtKB-KW"/>
</dbReference>
<dbReference type="GO" id="GO:0035529">
    <property type="term" value="F:NADH pyrophosphatase activity"/>
    <property type="evidence" value="ECO:0000318"/>
    <property type="project" value="GO_Central"/>
</dbReference>
<dbReference type="GO" id="GO:0019677">
    <property type="term" value="P:NAD catabolic process"/>
    <property type="evidence" value="ECO:0000318"/>
    <property type="project" value="GO_Central"/>
</dbReference>
<dbReference type="GO" id="GO:0006734">
    <property type="term" value="P:NADH metabolic process"/>
    <property type="evidence" value="ECO:0000318"/>
    <property type="project" value="GO_Central"/>
</dbReference>
<dbReference type="GO" id="GO:0006742">
    <property type="term" value="P:NADP catabolic process"/>
    <property type="evidence" value="ECO:0000318"/>
    <property type="project" value="GO_Central"/>
</dbReference>
<dbReference type="CDD" id="cd04694">
    <property type="entry name" value="NUDIX_Nudt17"/>
    <property type="match status" value="1"/>
</dbReference>
<dbReference type="FunFam" id="3.90.79.10:FF:000033">
    <property type="entry name" value="nucleoside diphosphate-linked moiety X motif 17 isoform X1"/>
    <property type="match status" value="1"/>
</dbReference>
<dbReference type="Gene3D" id="3.90.79.10">
    <property type="entry name" value="Nucleoside Triphosphate Pyrophosphohydrolase"/>
    <property type="match status" value="1"/>
</dbReference>
<dbReference type="InterPro" id="IPR050241">
    <property type="entry name" value="NAD-cap_RNA_hydrolase_NudC"/>
</dbReference>
<dbReference type="InterPro" id="IPR020476">
    <property type="entry name" value="Nudix_hydrolase"/>
</dbReference>
<dbReference type="InterPro" id="IPR015797">
    <property type="entry name" value="NUDIX_hydrolase-like_dom_sf"/>
</dbReference>
<dbReference type="InterPro" id="IPR000086">
    <property type="entry name" value="NUDIX_hydrolase_dom"/>
</dbReference>
<dbReference type="InterPro" id="IPR033716">
    <property type="entry name" value="Nudt17_dom"/>
</dbReference>
<dbReference type="PANTHER" id="PTHR42904:SF1">
    <property type="entry name" value="NUCLEOSIDE DIPHOSPHATE-LINKED MOIETY X MOTIF 17"/>
    <property type="match status" value="1"/>
</dbReference>
<dbReference type="PANTHER" id="PTHR42904">
    <property type="entry name" value="NUDIX HYDROLASE, NUDC SUBFAMILY"/>
    <property type="match status" value="1"/>
</dbReference>
<dbReference type="Pfam" id="PF00293">
    <property type="entry name" value="NUDIX"/>
    <property type="match status" value="1"/>
</dbReference>
<dbReference type="PRINTS" id="PR00502">
    <property type="entry name" value="NUDIXFAMILY"/>
</dbReference>
<dbReference type="SUPFAM" id="SSF55811">
    <property type="entry name" value="Nudix"/>
    <property type="match status" value="1"/>
</dbReference>
<dbReference type="PROSITE" id="PS51462">
    <property type="entry name" value="NUDIX"/>
    <property type="match status" value="1"/>
</dbReference>
<keyword id="KW-0378">Hydrolase</keyword>
<keyword id="KW-0460">Magnesium</keyword>
<keyword id="KW-0464">Manganese</keyword>
<keyword id="KW-0479">Metal-binding</keyword>
<keyword id="KW-1185">Reference proteome</keyword>
<sequence length="296" mass="32542">MESAKRVLVYLTKENSLLQCAKFAQGITGHYSANNGDKAFIHCGLEKNQFVISDCQFLGSARVQLQRPSFCPIKNLSPRQSASLPQEIQGRGVDVGVAVLVQSINKKVLLTRRSKSLNIFPNVWVPPGGHVELGEQLLEAGLRELQEETGLRLQEVSWSMLGLWESAFPPLLSRGLPSRHHIVTYLLVQTNETHQQMQERLCPDEREVSACVWLDTEIAKHIVAAEDSGSPCGPLPASISVLELIHGSLSQSDRSMATFLNSAPKEGEDIERISTGTKYALSLWLDGMPTNSSPCA</sequence>
<gene>
    <name type="primary">nudt17</name>
</gene>
<feature type="chain" id="PRO_0000380518" description="m7GpppN-mRNA hydrolase NUDT17">
    <location>
        <begin position="1"/>
        <end position="296"/>
    </location>
</feature>
<feature type="domain" description="Nudix hydrolase" evidence="3">
    <location>
        <begin position="90"/>
        <end position="236"/>
    </location>
</feature>
<feature type="short sequence motif" description="Nudix box">
    <location>
        <begin position="129"/>
        <end position="150"/>
    </location>
</feature>
<feature type="binding site" evidence="1">
    <location>
        <position position="144"/>
    </location>
    <ligand>
        <name>Mg(2+)</name>
        <dbReference type="ChEBI" id="CHEBI:18420"/>
    </ligand>
</feature>
<feature type="binding site" evidence="1">
    <location>
        <position position="148"/>
    </location>
    <ligand>
        <name>Mg(2+)</name>
        <dbReference type="ChEBI" id="CHEBI:18420"/>
    </ligand>
</feature>
<accession>Q5PQ04</accession>
<reference key="1">
    <citation type="submission" date="2004-12" db="EMBL/GenBank/DDBJ databases">
        <authorList>
            <consortium name="NIH - Xenopus Gene Collection (XGC) project"/>
        </authorList>
    </citation>
    <scope>NUCLEOTIDE SEQUENCE [LARGE SCALE MRNA]</scope>
    <source>
        <tissue>Testis</tissue>
    </source>
</reference>
<organism>
    <name type="scientific">Xenopus laevis</name>
    <name type="common">African clawed frog</name>
    <dbReference type="NCBI Taxonomy" id="8355"/>
    <lineage>
        <taxon>Eukaryota</taxon>
        <taxon>Metazoa</taxon>
        <taxon>Chordata</taxon>
        <taxon>Craniata</taxon>
        <taxon>Vertebrata</taxon>
        <taxon>Euteleostomi</taxon>
        <taxon>Amphibia</taxon>
        <taxon>Batrachia</taxon>
        <taxon>Anura</taxon>
        <taxon>Pipoidea</taxon>
        <taxon>Pipidae</taxon>
        <taxon>Xenopodinae</taxon>
        <taxon>Xenopus</taxon>
        <taxon>Xenopus</taxon>
    </lineage>
</organism>
<comment type="function">
    <text evidence="2">Acts as a decapping enzyme capable of hydrolyzing monomethylated capped RNAs (in vitro). Hydrolyzes monomethylated capped RNA after alpha and beta phosphates to form N(7)-methyl-GDP. Shows low activity towards unmethylated capped RNA.</text>
</comment>
<comment type="catalytic activity">
    <reaction evidence="2">
        <text>a 5'-end (N(7)-methyl 5'-triphosphoguanosine)-ribonucleoside in mRNA + H2O = N(7)-methyl-GDP + a 5'-end phospho-ribonucleoside in mRNA + 2 H(+)</text>
        <dbReference type="Rhea" id="RHEA:67484"/>
        <dbReference type="Rhea" id="RHEA-COMP:15692"/>
        <dbReference type="Rhea" id="RHEA-COMP:17167"/>
        <dbReference type="ChEBI" id="CHEBI:15377"/>
        <dbReference type="ChEBI" id="CHEBI:15378"/>
        <dbReference type="ChEBI" id="CHEBI:63714"/>
        <dbReference type="ChEBI" id="CHEBI:138282"/>
        <dbReference type="ChEBI" id="CHEBI:156461"/>
        <dbReference type="EC" id="3.6.1.62"/>
    </reaction>
</comment>
<comment type="cofactor">
    <cofactor evidence="1">
        <name>Mg(2+)</name>
        <dbReference type="ChEBI" id="CHEBI:18420"/>
    </cofactor>
    <cofactor evidence="1">
        <name>Mn(2+)</name>
        <dbReference type="ChEBI" id="CHEBI:29035"/>
    </cofactor>
</comment>
<comment type="similarity">
    <text evidence="4">Belongs to the Nudix hydrolase family.</text>
</comment>
<name>NUD17_XENLA</name>